<keyword id="KW-0249">Electron transport</keyword>
<keyword id="KW-0349">Heme</keyword>
<keyword id="KW-0408">Iron</keyword>
<keyword id="KW-0472">Membrane</keyword>
<keyword id="KW-0479">Metal-binding</keyword>
<keyword id="KW-0496">Mitochondrion</keyword>
<keyword id="KW-0999">Mitochondrion inner membrane</keyword>
<keyword id="KW-0679">Respiratory chain</keyword>
<keyword id="KW-0812">Transmembrane</keyword>
<keyword id="KW-1133">Transmembrane helix</keyword>
<keyword id="KW-0813">Transport</keyword>
<keyword id="KW-0830">Ubiquinone</keyword>
<gene>
    <name type="primary">MT-CYB</name>
    <name type="synonym">COB</name>
    <name type="synonym">CYTB</name>
    <name type="synonym">MTCYB</name>
</gene>
<feature type="chain" id="PRO_0000061666" description="Cytochrome b">
    <location>
        <begin position="1" status="less than"/>
        <end position="308" status="greater than"/>
    </location>
</feature>
<feature type="transmembrane region" description="Helical" evidence="2">
    <location>
        <begin position="1"/>
        <end position="21"/>
    </location>
</feature>
<feature type="transmembrane region" description="Helical" evidence="2">
    <location>
        <begin position="45"/>
        <end position="66"/>
    </location>
</feature>
<feature type="transmembrane region" description="Helical" evidence="2">
    <location>
        <begin position="81"/>
        <end position="101"/>
    </location>
</feature>
<feature type="transmembrane region" description="Helical" evidence="2">
    <location>
        <begin position="146"/>
        <end position="166"/>
    </location>
</feature>
<feature type="transmembrane region" description="Helical" evidence="2">
    <location>
        <begin position="194"/>
        <end position="214"/>
    </location>
</feature>
<feature type="transmembrane region" description="Helical" evidence="2">
    <location>
        <begin position="256"/>
        <end position="276"/>
    </location>
</feature>
<feature type="transmembrane region" description="Helical" evidence="2">
    <location>
        <begin position="288"/>
        <end position="308"/>
    </location>
</feature>
<feature type="binding site" description="axial binding residue" evidence="2">
    <location>
        <position position="51"/>
    </location>
    <ligand>
        <name>heme b</name>
        <dbReference type="ChEBI" id="CHEBI:60344"/>
        <label>b562</label>
    </ligand>
    <ligandPart>
        <name>Fe</name>
        <dbReference type="ChEBI" id="CHEBI:18248"/>
    </ligandPart>
</feature>
<feature type="binding site" description="axial binding residue" evidence="2">
    <location>
        <position position="65"/>
    </location>
    <ligand>
        <name>heme b</name>
        <dbReference type="ChEBI" id="CHEBI:60344"/>
        <label>b566</label>
    </ligand>
    <ligandPart>
        <name>Fe</name>
        <dbReference type="ChEBI" id="CHEBI:18248"/>
    </ligandPart>
</feature>
<feature type="binding site" description="axial binding residue" evidence="2">
    <location>
        <position position="150"/>
    </location>
    <ligand>
        <name>heme b</name>
        <dbReference type="ChEBI" id="CHEBI:60344"/>
        <label>b562</label>
    </ligand>
    <ligandPart>
        <name>Fe</name>
        <dbReference type="ChEBI" id="CHEBI:18248"/>
    </ligandPart>
</feature>
<feature type="binding site" description="axial binding residue" evidence="2">
    <location>
        <position position="164"/>
    </location>
    <ligand>
        <name>heme b</name>
        <dbReference type="ChEBI" id="CHEBI:60344"/>
        <label>b566</label>
    </ligand>
    <ligandPart>
        <name>Fe</name>
        <dbReference type="ChEBI" id="CHEBI:18248"/>
    </ligandPart>
</feature>
<feature type="binding site" evidence="2">
    <location>
        <position position="169"/>
    </location>
    <ligand>
        <name>a ubiquinone</name>
        <dbReference type="ChEBI" id="CHEBI:16389"/>
    </ligand>
</feature>
<feature type="non-terminal residue">
    <location>
        <position position="1"/>
    </location>
</feature>
<feature type="non-terminal residue">
    <location>
        <position position="308"/>
    </location>
</feature>
<reference key="1">
    <citation type="journal article" date="1991" name="Proc. R. Soc. B">
        <title>Mitochondrial resolution of a deep branch in the genealogical tree for perching birds.</title>
        <authorList>
            <person name="Edwards S.V."/>
            <person name="Arctander P."/>
            <person name="Wilson A.C."/>
        </authorList>
    </citation>
    <scope>NUCLEOTIDE SEQUENCE [GENOMIC DNA]</scope>
</reference>
<reference key="2">
    <citation type="journal article" date="1996" name="Proc. R. Soc. B">
        <authorList>
            <person name="Edwards S.V."/>
            <person name="Arctander P."/>
        </authorList>
    </citation>
    <scope>ERRATUM OF PUBMED:1676522</scope>
</reference>
<organism>
    <name type="scientific">Asthenes dorbignyi</name>
    <name type="common">Creamy-breasted canastero</name>
    <name type="synonym">Thripophaga dorbignyi</name>
    <dbReference type="NCBI Taxonomy" id="9138"/>
    <lineage>
        <taxon>Eukaryota</taxon>
        <taxon>Metazoa</taxon>
        <taxon>Chordata</taxon>
        <taxon>Craniata</taxon>
        <taxon>Vertebrata</taxon>
        <taxon>Euteleostomi</taxon>
        <taxon>Archelosauria</taxon>
        <taxon>Archosauria</taxon>
        <taxon>Dinosauria</taxon>
        <taxon>Saurischia</taxon>
        <taxon>Theropoda</taxon>
        <taxon>Coelurosauria</taxon>
        <taxon>Aves</taxon>
        <taxon>Neognathae</taxon>
        <taxon>Neoaves</taxon>
        <taxon>Telluraves</taxon>
        <taxon>Australaves</taxon>
        <taxon>Passeriformes</taxon>
        <taxon>Furnariidae</taxon>
        <taxon>Asthenes</taxon>
    </lineage>
</organism>
<comment type="function">
    <text evidence="2">Component of the ubiquinol-cytochrome c reductase complex (complex III or cytochrome b-c1 complex) that is part of the mitochondrial respiratory chain. The b-c1 complex mediates electron transfer from ubiquinol to cytochrome c. Contributes to the generation of a proton gradient across the mitochondrial membrane that is then used for ATP synthesis.</text>
</comment>
<comment type="cofactor">
    <cofactor evidence="2">
        <name>heme b</name>
        <dbReference type="ChEBI" id="CHEBI:60344"/>
    </cofactor>
    <text evidence="2">Binds 2 heme b groups non-covalently.</text>
</comment>
<comment type="subunit">
    <text evidence="2">The cytochrome bc1 complex contains 11 subunits: 3 respiratory subunits (MT-CYB, CYC1 and UQCRFS1), 2 core proteins (UQCRC1 and UQCRC2) and 6 low-molecular weight proteins (UQCRH/QCR6, UQCRB/QCR7, UQCRQ/QCR8, UQCR10/QCR9, UQCR11/QCR10 and a cleavage product of UQCRFS1). This cytochrome bc1 complex then forms a dimer.</text>
</comment>
<comment type="subcellular location">
    <subcellularLocation>
        <location evidence="2">Mitochondrion inner membrane</location>
        <topology evidence="2">Multi-pass membrane protein</topology>
    </subcellularLocation>
</comment>
<comment type="miscellaneous">
    <text evidence="1">Heme 1 (or BL or b562) is low-potential and absorbs at about 562 nm, and heme 2 (or BH or b566) is high-potential and absorbs at about 566 nm.</text>
</comment>
<comment type="similarity">
    <text evidence="3 4">Belongs to the cytochrome b family.</text>
</comment>
<comment type="caution">
    <text evidence="2">The full-length protein contains only eight transmembrane helices, not nine as predicted by bioinformatics tools.</text>
</comment>
<evidence type="ECO:0000250" key="1"/>
<evidence type="ECO:0000250" key="2">
    <source>
        <dbReference type="UniProtKB" id="P00157"/>
    </source>
</evidence>
<evidence type="ECO:0000255" key="3">
    <source>
        <dbReference type="PROSITE-ProRule" id="PRU00967"/>
    </source>
</evidence>
<evidence type="ECO:0000255" key="4">
    <source>
        <dbReference type="PROSITE-ProRule" id="PRU00968"/>
    </source>
</evidence>
<proteinExistence type="inferred from homology"/>
<geneLocation type="mitochondrion"/>
<name>CYB_ASTDO</name>
<protein>
    <recommendedName>
        <fullName>Cytochrome b</fullName>
    </recommendedName>
    <alternativeName>
        <fullName>Complex III subunit 3</fullName>
    </alternativeName>
    <alternativeName>
        <fullName>Complex III subunit III</fullName>
    </alternativeName>
    <alternativeName>
        <fullName>Cytochrome b-c1 complex subunit 3</fullName>
    </alternativeName>
    <alternativeName>
        <fullName>Ubiquinol-cytochrome-c reductase complex cytochrome b subunit</fullName>
    </alternativeName>
</protein>
<sequence length="308" mass="34520">FGSLLGICLMTQIITGLLMAMHYTADTTLAFTSVAHTCRNVQFGWLIRNLHANGASMFFICIYLHIGRGFYYGSYLFKETWNTGVILLLTLMATAFVGYVLPWGQMSFWGATVITNLFSAIPYIGQTLVEWAWGGFSVDNPMLTRFFALHFLLPFMIAGLTFIHLTFLHETGSNNPLGISSNCDKIPFHPYFSTKDILGFLAMLVPLTALAMFSPNLLGDPENFTPANPLVTPPHIKPEWYFLFAYAILRSIPNKLGGVLALAASVLILFLIPFLHKSKQRTMTFRPLSQLLFWILVTNLLILTWVGS</sequence>
<dbReference type="EMBL" id="X60946">
    <property type="protein sequence ID" value="CAA43281.1"/>
    <property type="molecule type" value="Genomic_DNA"/>
</dbReference>
<dbReference type="SMR" id="P29642"/>
<dbReference type="GO" id="GO:0005743">
    <property type="term" value="C:mitochondrial inner membrane"/>
    <property type="evidence" value="ECO:0007669"/>
    <property type="project" value="UniProtKB-SubCell"/>
</dbReference>
<dbReference type="GO" id="GO:0046872">
    <property type="term" value="F:metal ion binding"/>
    <property type="evidence" value="ECO:0007669"/>
    <property type="project" value="UniProtKB-KW"/>
</dbReference>
<dbReference type="GO" id="GO:0008121">
    <property type="term" value="F:ubiquinol-cytochrome-c reductase activity"/>
    <property type="evidence" value="ECO:0007669"/>
    <property type="project" value="TreeGrafter"/>
</dbReference>
<dbReference type="GO" id="GO:0006122">
    <property type="term" value="P:mitochondrial electron transport, ubiquinol to cytochrome c"/>
    <property type="evidence" value="ECO:0007669"/>
    <property type="project" value="TreeGrafter"/>
</dbReference>
<dbReference type="CDD" id="cd00290">
    <property type="entry name" value="cytochrome_b_C"/>
    <property type="match status" value="1"/>
</dbReference>
<dbReference type="CDD" id="cd00284">
    <property type="entry name" value="Cytochrome_b_N"/>
    <property type="match status" value="1"/>
</dbReference>
<dbReference type="Gene3D" id="1.20.810.10">
    <property type="entry name" value="Cytochrome Bc1 Complex, Chain C"/>
    <property type="match status" value="1"/>
</dbReference>
<dbReference type="InterPro" id="IPR005798">
    <property type="entry name" value="Cyt_b/b6_C"/>
</dbReference>
<dbReference type="InterPro" id="IPR036150">
    <property type="entry name" value="Cyt_b/b6_C_sf"/>
</dbReference>
<dbReference type="InterPro" id="IPR005797">
    <property type="entry name" value="Cyt_b/b6_N"/>
</dbReference>
<dbReference type="InterPro" id="IPR027387">
    <property type="entry name" value="Cytb/b6-like_sf"/>
</dbReference>
<dbReference type="InterPro" id="IPR048260">
    <property type="entry name" value="Cytochrome_b_C_euk/bac"/>
</dbReference>
<dbReference type="InterPro" id="IPR048259">
    <property type="entry name" value="Cytochrome_b_N_euk/bac"/>
</dbReference>
<dbReference type="InterPro" id="IPR016174">
    <property type="entry name" value="Di-haem_cyt_TM"/>
</dbReference>
<dbReference type="PANTHER" id="PTHR19271">
    <property type="entry name" value="CYTOCHROME B"/>
    <property type="match status" value="1"/>
</dbReference>
<dbReference type="PANTHER" id="PTHR19271:SF16">
    <property type="entry name" value="CYTOCHROME B"/>
    <property type="match status" value="1"/>
</dbReference>
<dbReference type="Pfam" id="PF00032">
    <property type="entry name" value="Cytochrom_B_C"/>
    <property type="match status" value="1"/>
</dbReference>
<dbReference type="Pfam" id="PF00033">
    <property type="entry name" value="Cytochrome_B"/>
    <property type="match status" value="1"/>
</dbReference>
<dbReference type="SUPFAM" id="SSF81648">
    <property type="entry name" value="a domain/subunit of cytochrome bc1 complex (Ubiquinol-cytochrome c reductase)"/>
    <property type="match status" value="1"/>
</dbReference>
<dbReference type="SUPFAM" id="SSF81342">
    <property type="entry name" value="Transmembrane di-heme cytochromes"/>
    <property type="match status" value="1"/>
</dbReference>
<dbReference type="PROSITE" id="PS51003">
    <property type="entry name" value="CYTB_CTER"/>
    <property type="match status" value="1"/>
</dbReference>
<dbReference type="PROSITE" id="PS51002">
    <property type="entry name" value="CYTB_NTER"/>
    <property type="match status" value="1"/>
</dbReference>
<accession>P29642</accession>